<comment type="similarity">
    <text evidence="1">Belongs to the UPF0302 family.</text>
</comment>
<proteinExistence type="inferred from homology"/>
<feature type="chain" id="PRO_1000198315" description="UPF0302 protein BcerKBAB4_1445">
    <location>
        <begin position="1"/>
        <end position="178"/>
    </location>
</feature>
<gene>
    <name type="ordered locus">BcerKBAB4_1445</name>
</gene>
<protein>
    <recommendedName>
        <fullName evidence="1">UPF0302 protein BcerKBAB4_1445</fullName>
    </recommendedName>
</protein>
<reference key="1">
    <citation type="journal article" date="2008" name="Chem. Biol. Interact.">
        <title>Extending the Bacillus cereus group genomics to putative food-borne pathogens of different toxicity.</title>
        <authorList>
            <person name="Lapidus A."/>
            <person name="Goltsman E."/>
            <person name="Auger S."/>
            <person name="Galleron N."/>
            <person name="Segurens B."/>
            <person name="Dossat C."/>
            <person name="Land M.L."/>
            <person name="Broussolle V."/>
            <person name="Brillard J."/>
            <person name="Guinebretiere M.-H."/>
            <person name="Sanchis V."/>
            <person name="Nguen-the C."/>
            <person name="Lereclus D."/>
            <person name="Richardson P."/>
            <person name="Wincker P."/>
            <person name="Weissenbach J."/>
            <person name="Ehrlich S.D."/>
            <person name="Sorokin A."/>
        </authorList>
    </citation>
    <scope>NUCLEOTIDE SEQUENCE [LARGE SCALE GENOMIC DNA]</scope>
    <source>
        <strain>KBAB4</strain>
    </source>
</reference>
<dbReference type="EMBL" id="CP000903">
    <property type="protein sequence ID" value="ABY42692.1"/>
    <property type="molecule type" value="Genomic_DNA"/>
</dbReference>
<dbReference type="RefSeq" id="WP_002086615.1">
    <property type="nucleotide sequence ID" value="NZ_CAKMRX030000177.1"/>
</dbReference>
<dbReference type="SMR" id="A9VMD0"/>
<dbReference type="KEGG" id="bwe:BcerKBAB4_1445"/>
<dbReference type="eggNOG" id="COG5582">
    <property type="taxonomic scope" value="Bacteria"/>
</dbReference>
<dbReference type="HOGENOM" id="CLU_126019_0_0_9"/>
<dbReference type="Proteomes" id="UP000002154">
    <property type="component" value="Chromosome"/>
</dbReference>
<dbReference type="Gene3D" id="3.40.1530.30">
    <property type="entry name" value="Uncharacterised family UPF0302, N-terminal domain"/>
    <property type="match status" value="1"/>
</dbReference>
<dbReference type="Gene3D" id="4.10.810.10">
    <property type="entry name" value="Virus Scaffolding Protein, Chain A"/>
    <property type="match status" value="1"/>
</dbReference>
<dbReference type="HAMAP" id="MF_00760">
    <property type="entry name" value="UPF0302"/>
    <property type="match status" value="1"/>
</dbReference>
<dbReference type="InterPro" id="IPR014957">
    <property type="entry name" value="IDEAL_dom"/>
</dbReference>
<dbReference type="InterPro" id="IPR011188">
    <property type="entry name" value="UPF0302"/>
</dbReference>
<dbReference type="InterPro" id="IPR014963">
    <property type="entry name" value="UPF0302_N"/>
</dbReference>
<dbReference type="InterPro" id="IPR038091">
    <property type="entry name" value="UPF0302_N_sf"/>
</dbReference>
<dbReference type="InterPro" id="IPR027393">
    <property type="entry name" value="Virus_scaffolding_prot_C"/>
</dbReference>
<dbReference type="NCBIfam" id="NF002965">
    <property type="entry name" value="PRK03636.1"/>
    <property type="match status" value="1"/>
</dbReference>
<dbReference type="Pfam" id="PF08858">
    <property type="entry name" value="IDEAL"/>
    <property type="match status" value="1"/>
</dbReference>
<dbReference type="Pfam" id="PF08864">
    <property type="entry name" value="UPF0302"/>
    <property type="match status" value="1"/>
</dbReference>
<dbReference type="PIRSF" id="PIRSF007165">
    <property type="entry name" value="UCP007165"/>
    <property type="match status" value="1"/>
</dbReference>
<dbReference type="SMART" id="SM00914">
    <property type="entry name" value="IDEAL"/>
    <property type="match status" value="1"/>
</dbReference>
<evidence type="ECO:0000255" key="1">
    <source>
        <dbReference type="HAMAP-Rule" id="MF_00760"/>
    </source>
</evidence>
<accession>A9VMD0</accession>
<sequence length="178" mass="21414">MNTPVSVNEKKDFVKWFLNNYQLKQRECVWILNYLMSHDQLMHKVHFVEHAKYCPRGLVMSANCVKDTPFHFFKQNVMTTDAEKSFHDIRLNRDEDIYIQLNFKSSFQNANYVAVLEENPYLPKHIEVNEKDRLLAERFLEESVFSFRRERLLKQIDEALDKQDKEAFHRLTAELKIL</sequence>
<name>Y1445_BACMK</name>
<organism>
    <name type="scientific">Bacillus mycoides (strain KBAB4)</name>
    <name type="common">Bacillus weihenstephanensis</name>
    <dbReference type="NCBI Taxonomy" id="315730"/>
    <lineage>
        <taxon>Bacteria</taxon>
        <taxon>Bacillati</taxon>
        <taxon>Bacillota</taxon>
        <taxon>Bacilli</taxon>
        <taxon>Bacillales</taxon>
        <taxon>Bacillaceae</taxon>
        <taxon>Bacillus</taxon>
        <taxon>Bacillus cereus group</taxon>
    </lineage>
</organism>